<evidence type="ECO:0000255" key="1">
    <source>
        <dbReference type="PROSITE-ProRule" id="PRU00184"/>
    </source>
</evidence>
<evidence type="ECO:0000305" key="2"/>
<comment type="sequence caution" evidence="2">
    <conflict type="erroneous termination">
        <sequence resource="EMBL-CDS" id="CAG31120"/>
    </conflict>
    <text>Truncated C-terminus.</text>
</comment>
<keyword id="KW-1185">Reference proteome</keyword>
<keyword id="KW-0677">Repeat</keyword>
<keyword id="KW-0853">WD repeat</keyword>
<reference key="1">
    <citation type="journal article" date="2005" name="Genome Biol.">
        <title>Full-length cDNAs from chicken bursal lymphocytes to facilitate gene function analysis.</title>
        <authorList>
            <person name="Caldwell R.B."/>
            <person name="Kierzek A.M."/>
            <person name="Arakawa H."/>
            <person name="Bezzubov Y."/>
            <person name="Zaim J."/>
            <person name="Fiedler P."/>
            <person name="Kutter S."/>
            <person name="Blagodatski A."/>
            <person name="Kostovska D."/>
            <person name="Koter M."/>
            <person name="Plachy J."/>
            <person name="Carninci P."/>
            <person name="Hayashizaki Y."/>
            <person name="Buerstedde J.-M."/>
        </authorList>
    </citation>
    <scope>NUCLEOTIDE SEQUENCE [LARGE SCALE MRNA]</scope>
    <source>
        <strain>CB</strain>
        <tissue>Bursa of Fabricius</tissue>
    </source>
</reference>
<sequence length="476" mass="52422">MATLIHTLTDHSDDVNCCAFSSSCLATCSLDKTIRIYSLNDFTELPYSPLKGHTYAVHCCCFSPSGHTLASCSTDGATIIWDTSDGRMLAVLEQPTGSPVRVCRFSPESTYLVSGAADGSVVLWNVHSMKFYRSGNVKDGSLVACAFSPGGNFFVTGSSCGDLTVWDDKMRCLCNEKAHDLGVTCCDISSHPVSDGEHASGCFQMASCGQDNKIKVWFILFADFLGGELRYKCTLSGHSAPVLTCAFSYDGQMLVSGSVDKCVIIYETNTGNILHTLSQHTRYVTTCAFAPCSLFLATGSMDKTVHIWKLDNKQPCAGNTIENDSKIRTAENWSEDDVSAWLCAQGFAELVGLFKANNIDGKELVNLTRESLIHELKMSLWLRSKILQKIEELRMKMVSVPVAVPDEFLCPITRELMKDPVIAADGYSYEKEAMENWISNNRRSSPMTNLPLPSLVLTPNRTLKMAISRWLETQQK</sequence>
<protein>
    <recommendedName>
        <fullName>WD repeat, SAM and U-box domain-containing protein 1</fullName>
    </recommendedName>
</protein>
<feature type="chain" id="PRO_0000278611" description="WD repeat, SAM and U-box domain-containing protein 1">
    <location>
        <begin position="1"/>
        <end position="476"/>
    </location>
</feature>
<feature type="repeat" description="WD 1">
    <location>
        <begin position="10"/>
        <end position="47"/>
    </location>
</feature>
<feature type="repeat" description="WD 2">
    <location>
        <begin position="52"/>
        <end position="91"/>
    </location>
</feature>
<feature type="repeat" description="WD 3">
    <location>
        <begin position="95"/>
        <end position="134"/>
    </location>
</feature>
<feature type="repeat" description="WD 4">
    <location>
        <begin position="137"/>
        <end position="176"/>
    </location>
</feature>
<feature type="repeat" description="WD 5">
    <location>
        <begin position="178"/>
        <end position="227"/>
    </location>
</feature>
<feature type="repeat" description="WD 6">
    <location>
        <begin position="237"/>
        <end position="276"/>
    </location>
</feature>
<feature type="repeat" description="WD 7">
    <location>
        <begin position="279"/>
        <end position="318"/>
    </location>
</feature>
<feature type="domain" description="SAM" evidence="1">
    <location>
        <begin position="333"/>
        <end position="396"/>
    </location>
</feature>
<feature type="domain" description="U-box">
    <location>
        <begin position="403"/>
        <end position="476"/>
    </location>
</feature>
<name>WSDU1_CHICK</name>
<organism>
    <name type="scientific">Gallus gallus</name>
    <name type="common">Chicken</name>
    <dbReference type="NCBI Taxonomy" id="9031"/>
    <lineage>
        <taxon>Eukaryota</taxon>
        <taxon>Metazoa</taxon>
        <taxon>Chordata</taxon>
        <taxon>Craniata</taxon>
        <taxon>Vertebrata</taxon>
        <taxon>Euteleostomi</taxon>
        <taxon>Archelosauria</taxon>
        <taxon>Archosauria</taxon>
        <taxon>Dinosauria</taxon>
        <taxon>Saurischia</taxon>
        <taxon>Theropoda</taxon>
        <taxon>Coelurosauria</taxon>
        <taxon>Aves</taxon>
        <taxon>Neognathae</taxon>
        <taxon>Galloanserae</taxon>
        <taxon>Galliformes</taxon>
        <taxon>Phasianidae</taxon>
        <taxon>Phasianinae</taxon>
        <taxon>Gallus</taxon>
    </lineage>
</organism>
<accession>Q5ZMC3</accession>
<gene>
    <name type="primary">WDSUB1</name>
    <name type="ORF">RCJMB04_2i21</name>
</gene>
<proteinExistence type="evidence at transcript level"/>
<dbReference type="EMBL" id="AJ719461">
    <property type="protein sequence ID" value="CAG31120.1"/>
    <property type="status" value="ALT_SEQ"/>
    <property type="molecule type" value="mRNA"/>
</dbReference>
<dbReference type="SMR" id="Q5ZMC3"/>
<dbReference type="FunCoup" id="Q5ZMC3">
    <property type="interactions" value="356"/>
</dbReference>
<dbReference type="STRING" id="9031.ENSGALP00000063627"/>
<dbReference type="PaxDb" id="9031-ENSGALP00000020504"/>
<dbReference type="VEuPathDB" id="HostDB:geneid_424331"/>
<dbReference type="eggNOG" id="KOG4155">
    <property type="taxonomic scope" value="Eukaryota"/>
</dbReference>
<dbReference type="InParanoid" id="Q5ZMC3"/>
<dbReference type="OrthoDB" id="10064100at2759"/>
<dbReference type="PhylomeDB" id="Q5ZMC3"/>
<dbReference type="TreeFam" id="TF328991"/>
<dbReference type="Proteomes" id="UP000000539">
    <property type="component" value="Unassembled WGS sequence"/>
</dbReference>
<dbReference type="GO" id="GO:0004842">
    <property type="term" value="F:ubiquitin-protein transferase activity"/>
    <property type="evidence" value="ECO:0007669"/>
    <property type="project" value="InterPro"/>
</dbReference>
<dbReference type="GO" id="GO:0016567">
    <property type="term" value="P:protein ubiquitination"/>
    <property type="evidence" value="ECO:0007669"/>
    <property type="project" value="InterPro"/>
</dbReference>
<dbReference type="CDD" id="cd16655">
    <property type="entry name" value="RING-Ubox_WDSUB1-like"/>
    <property type="match status" value="1"/>
</dbReference>
<dbReference type="CDD" id="cd09505">
    <property type="entry name" value="SAM_WDSUB1"/>
    <property type="match status" value="1"/>
</dbReference>
<dbReference type="CDD" id="cd00200">
    <property type="entry name" value="WD40"/>
    <property type="match status" value="1"/>
</dbReference>
<dbReference type="Gene3D" id="1.10.150.50">
    <property type="entry name" value="Transcription Factor, Ets-1"/>
    <property type="match status" value="1"/>
</dbReference>
<dbReference type="Gene3D" id="2.130.10.10">
    <property type="entry name" value="YVTN repeat-like/Quinoprotein amine dehydrogenase"/>
    <property type="match status" value="3"/>
</dbReference>
<dbReference type="Gene3D" id="3.30.40.10">
    <property type="entry name" value="Zinc/RING finger domain, C3HC4 (zinc finger)"/>
    <property type="match status" value="1"/>
</dbReference>
<dbReference type="InterPro" id="IPR020472">
    <property type="entry name" value="G-protein_beta_WD-40_rep"/>
</dbReference>
<dbReference type="InterPro" id="IPR011047">
    <property type="entry name" value="Quinoprotein_ADH-like_sf"/>
</dbReference>
<dbReference type="InterPro" id="IPR001660">
    <property type="entry name" value="SAM"/>
</dbReference>
<dbReference type="InterPro" id="IPR013761">
    <property type="entry name" value="SAM/pointed_sf"/>
</dbReference>
<dbReference type="InterPro" id="IPR003613">
    <property type="entry name" value="Ubox_domain"/>
</dbReference>
<dbReference type="InterPro" id="IPR052085">
    <property type="entry name" value="WD-SAM-U-box"/>
</dbReference>
<dbReference type="InterPro" id="IPR015943">
    <property type="entry name" value="WD40/YVTN_repeat-like_dom_sf"/>
</dbReference>
<dbReference type="InterPro" id="IPR019775">
    <property type="entry name" value="WD40_repeat_CS"/>
</dbReference>
<dbReference type="InterPro" id="IPR001680">
    <property type="entry name" value="WD40_rpt"/>
</dbReference>
<dbReference type="InterPro" id="IPR013083">
    <property type="entry name" value="Znf_RING/FYVE/PHD"/>
</dbReference>
<dbReference type="PANTHER" id="PTHR46573">
    <property type="entry name" value="WD REPEAT, SAM AND U-BOX DOMAIN-CONTAINING PROTEIN 1"/>
    <property type="match status" value="1"/>
</dbReference>
<dbReference type="PANTHER" id="PTHR46573:SF1">
    <property type="entry name" value="WD REPEAT, SAM AND U-BOX DOMAIN-CONTAINING PROTEIN 1"/>
    <property type="match status" value="1"/>
</dbReference>
<dbReference type="Pfam" id="PF07647">
    <property type="entry name" value="SAM_2"/>
    <property type="match status" value="1"/>
</dbReference>
<dbReference type="Pfam" id="PF04564">
    <property type="entry name" value="U-box"/>
    <property type="match status" value="1"/>
</dbReference>
<dbReference type="Pfam" id="PF00400">
    <property type="entry name" value="WD40"/>
    <property type="match status" value="7"/>
</dbReference>
<dbReference type="PRINTS" id="PR00320">
    <property type="entry name" value="GPROTEINBRPT"/>
</dbReference>
<dbReference type="SMART" id="SM00454">
    <property type="entry name" value="SAM"/>
    <property type="match status" value="1"/>
</dbReference>
<dbReference type="SMART" id="SM00504">
    <property type="entry name" value="Ubox"/>
    <property type="match status" value="1"/>
</dbReference>
<dbReference type="SMART" id="SM00320">
    <property type="entry name" value="WD40"/>
    <property type="match status" value="7"/>
</dbReference>
<dbReference type="SUPFAM" id="SSF50998">
    <property type="entry name" value="Quinoprotein alcohol dehydrogenase-like"/>
    <property type="match status" value="1"/>
</dbReference>
<dbReference type="SUPFAM" id="SSF57850">
    <property type="entry name" value="RING/U-box"/>
    <property type="match status" value="1"/>
</dbReference>
<dbReference type="SUPFAM" id="SSF47769">
    <property type="entry name" value="SAM/Pointed domain"/>
    <property type="match status" value="1"/>
</dbReference>
<dbReference type="PROSITE" id="PS50105">
    <property type="entry name" value="SAM_DOMAIN"/>
    <property type="match status" value="1"/>
</dbReference>
<dbReference type="PROSITE" id="PS51698">
    <property type="entry name" value="U_BOX"/>
    <property type="match status" value="1"/>
</dbReference>
<dbReference type="PROSITE" id="PS00678">
    <property type="entry name" value="WD_REPEATS_1"/>
    <property type="match status" value="2"/>
</dbReference>
<dbReference type="PROSITE" id="PS50082">
    <property type="entry name" value="WD_REPEATS_2"/>
    <property type="match status" value="4"/>
</dbReference>
<dbReference type="PROSITE" id="PS50294">
    <property type="entry name" value="WD_REPEATS_REGION"/>
    <property type="match status" value="1"/>
</dbReference>